<accession>Q8BKV0</accession>
<accession>Q9ER59</accession>
<gene>
    <name type="primary">Spock3</name>
</gene>
<proteinExistence type="evidence at transcript level"/>
<organism>
    <name type="scientific">Mus musculus</name>
    <name type="common">Mouse</name>
    <dbReference type="NCBI Taxonomy" id="10090"/>
    <lineage>
        <taxon>Eukaryota</taxon>
        <taxon>Metazoa</taxon>
        <taxon>Chordata</taxon>
        <taxon>Craniata</taxon>
        <taxon>Vertebrata</taxon>
        <taxon>Euteleostomi</taxon>
        <taxon>Mammalia</taxon>
        <taxon>Eutheria</taxon>
        <taxon>Euarchontoglires</taxon>
        <taxon>Glires</taxon>
        <taxon>Rodentia</taxon>
        <taxon>Myomorpha</taxon>
        <taxon>Muroidea</taxon>
        <taxon>Muridae</taxon>
        <taxon>Murinae</taxon>
        <taxon>Mus</taxon>
        <taxon>Mus</taxon>
    </lineage>
</organism>
<comment type="function">
    <text evidence="1">May participate in diverse steps of neurogenesis. Inhibits the processing of pro-matrix metalloproteinase 2 (MMP-2) by MT1-MMP and MT3-MMP. May interfere with tumor invasion (By similarity).</text>
</comment>
<comment type="subcellular location">
    <subcellularLocation>
        <location evidence="1">Secreted</location>
        <location evidence="1">Extracellular space</location>
        <location evidence="1">Extracellular matrix</location>
    </subcellularLocation>
</comment>
<comment type="alternative products">
    <event type="alternative splicing"/>
    <isoform>
        <id>Q8BKV0-1</id>
        <name>1</name>
        <sequence type="displayed"/>
    </isoform>
    <isoform>
        <id>Q8BKV0-2</id>
        <name>2</name>
        <sequence type="described" ref="VSP_013633"/>
    </isoform>
</comment>
<comment type="tissue specificity">
    <text>Expressed in brain.</text>
</comment>
<comment type="PTM">
    <text evidence="1">Contains chondroitin sulfate and heparan sulfate O-linked oligosaccharides.</text>
</comment>
<dbReference type="EMBL" id="AJ278998">
    <property type="protein sequence ID" value="CAC08506.1"/>
    <property type="molecule type" value="mRNA"/>
</dbReference>
<dbReference type="EMBL" id="AK013644">
    <property type="protein sequence ID" value="BAB28935.1"/>
    <property type="molecule type" value="mRNA"/>
</dbReference>
<dbReference type="EMBL" id="AK049843">
    <property type="protein sequence ID" value="BAC33951.1"/>
    <property type="molecule type" value="mRNA"/>
</dbReference>
<dbReference type="EMBL" id="BC017601">
    <property type="protein sequence ID" value="AAH17601.1"/>
    <property type="molecule type" value="mRNA"/>
</dbReference>
<dbReference type="EMBL" id="BC053334">
    <property type="protein sequence ID" value="AAH53334.1"/>
    <property type="molecule type" value="mRNA"/>
</dbReference>
<dbReference type="CCDS" id="CCDS22326.1">
    <molecule id="Q8BKV0-1"/>
</dbReference>
<dbReference type="CCDS" id="CCDS57622.1">
    <molecule id="Q8BKV0-2"/>
</dbReference>
<dbReference type="RefSeq" id="NP_001239549.1">
    <molecule id="Q8BKV0-1"/>
    <property type="nucleotide sequence ID" value="NM_001252620.1"/>
</dbReference>
<dbReference type="RefSeq" id="NP_001239550.1">
    <molecule id="Q8BKV0-2"/>
    <property type="nucleotide sequence ID" value="NM_001252621.1"/>
</dbReference>
<dbReference type="RefSeq" id="NP_001348847.1">
    <molecule id="Q8BKV0-2"/>
    <property type="nucleotide sequence ID" value="NM_001361918.1"/>
</dbReference>
<dbReference type="RefSeq" id="NP_076178.1">
    <molecule id="Q8BKV0-1"/>
    <property type="nucleotide sequence ID" value="NM_023689.3"/>
</dbReference>
<dbReference type="RefSeq" id="XP_006509581.1">
    <property type="nucleotide sequence ID" value="XM_006509518.1"/>
</dbReference>
<dbReference type="SMR" id="Q8BKV0"/>
<dbReference type="FunCoup" id="Q8BKV0">
    <property type="interactions" value="567"/>
</dbReference>
<dbReference type="STRING" id="10090.ENSMUSP00000112930"/>
<dbReference type="MEROPS" id="I01.980"/>
<dbReference type="MEROPS" id="I31.007"/>
<dbReference type="GlyCosmos" id="Q8BKV0">
    <property type="glycosylation" value="2 sites, No reported glycans"/>
</dbReference>
<dbReference type="GlyGen" id="Q8BKV0">
    <property type="glycosylation" value="2 sites"/>
</dbReference>
<dbReference type="iPTMnet" id="Q8BKV0"/>
<dbReference type="PhosphoSitePlus" id="Q8BKV0"/>
<dbReference type="PaxDb" id="10090-ENSMUSP00000112930"/>
<dbReference type="ProteomicsDB" id="259388">
    <molecule id="Q8BKV0-1"/>
</dbReference>
<dbReference type="ProteomicsDB" id="259389">
    <molecule id="Q8BKV0-2"/>
</dbReference>
<dbReference type="Antibodypedia" id="28345">
    <property type="antibodies" value="131 antibodies from 19 providers"/>
</dbReference>
<dbReference type="DNASU" id="72902"/>
<dbReference type="Ensembl" id="ENSMUST00000093480.6">
    <molecule id="Q8BKV0-1"/>
    <property type="protein sequence ID" value="ENSMUSP00000091192.5"/>
    <property type="gene ID" value="ENSMUSG00000054162.16"/>
</dbReference>
<dbReference type="Ensembl" id="ENSMUST00000117377.8">
    <molecule id="Q8BKV0-2"/>
    <property type="protein sequence ID" value="ENSMUSP00000113797.2"/>
    <property type="gene ID" value="ENSMUSG00000054162.16"/>
</dbReference>
<dbReference type="Ensembl" id="ENSMUST00000118003.8">
    <molecule id="Q8BKV0-1"/>
    <property type="protein sequence ID" value="ENSMUSP00000113683.2"/>
    <property type="gene ID" value="ENSMUSG00000054162.16"/>
</dbReference>
<dbReference type="Ensembl" id="ENSMUST00000119068.8">
    <molecule id="Q8BKV0-1"/>
    <property type="protein sequence ID" value="ENSMUSP00000112930.2"/>
    <property type="gene ID" value="ENSMUSG00000054162.16"/>
</dbReference>
<dbReference type="GeneID" id="72902"/>
<dbReference type="KEGG" id="mmu:72902"/>
<dbReference type="UCSC" id="uc009lur.1">
    <molecule id="Q8BKV0-2"/>
    <property type="organism name" value="mouse"/>
</dbReference>
<dbReference type="UCSC" id="uc009lus.2">
    <molecule id="Q8BKV0-1"/>
    <property type="organism name" value="mouse"/>
</dbReference>
<dbReference type="AGR" id="MGI:1920152"/>
<dbReference type="CTD" id="50859"/>
<dbReference type="MGI" id="MGI:1920152">
    <property type="gene designation" value="Spock3"/>
</dbReference>
<dbReference type="VEuPathDB" id="HostDB:ENSMUSG00000054162"/>
<dbReference type="eggNOG" id="KOG3555">
    <property type="taxonomic scope" value="Eukaryota"/>
</dbReference>
<dbReference type="GeneTree" id="ENSGT00940000157828"/>
<dbReference type="HOGENOM" id="CLU_037217_1_0_1"/>
<dbReference type="InParanoid" id="Q8BKV0"/>
<dbReference type="OMA" id="KQCPVIY"/>
<dbReference type="OrthoDB" id="8875634at2759"/>
<dbReference type="PhylomeDB" id="Q8BKV0"/>
<dbReference type="TreeFam" id="TF317779"/>
<dbReference type="Reactome" id="R-MMU-1592389">
    <property type="pathway name" value="Activation of Matrix Metalloproteinases"/>
</dbReference>
<dbReference type="BioGRID-ORCS" id="72902">
    <property type="hits" value="3 hits in 78 CRISPR screens"/>
</dbReference>
<dbReference type="ChiTaRS" id="Spock3">
    <property type="organism name" value="mouse"/>
</dbReference>
<dbReference type="PRO" id="PR:Q8BKV0"/>
<dbReference type="Proteomes" id="UP000000589">
    <property type="component" value="Chromosome 8"/>
</dbReference>
<dbReference type="RNAct" id="Q8BKV0">
    <property type="molecule type" value="protein"/>
</dbReference>
<dbReference type="Bgee" id="ENSMUSG00000054162">
    <property type="expression patterns" value="Expressed in caudate-putamen and 132 other cell types or tissues"/>
</dbReference>
<dbReference type="GO" id="GO:0005576">
    <property type="term" value="C:extracellular region"/>
    <property type="evidence" value="ECO:0007669"/>
    <property type="project" value="UniProtKB-KW"/>
</dbReference>
<dbReference type="GO" id="GO:0005509">
    <property type="term" value="F:calcium ion binding"/>
    <property type="evidence" value="ECO:0007669"/>
    <property type="project" value="InterPro"/>
</dbReference>
<dbReference type="GO" id="GO:0005539">
    <property type="term" value="F:glycosaminoglycan binding"/>
    <property type="evidence" value="ECO:0000314"/>
    <property type="project" value="MGI"/>
</dbReference>
<dbReference type="GO" id="GO:0030414">
    <property type="term" value="F:peptidase inhibitor activity"/>
    <property type="evidence" value="ECO:0007669"/>
    <property type="project" value="UniProtKB-KW"/>
</dbReference>
<dbReference type="CDD" id="cd16239">
    <property type="entry name" value="EFh_SPARC_TICN3"/>
    <property type="match status" value="1"/>
</dbReference>
<dbReference type="CDD" id="cd00104">
    <property type="entry name" value="KAZAL_FS"/>
    <property type="match status" value="1"/>
</dbReference>
<dbReference type="CDD" id="cd00191">
    <property type="entry name" value="TY"/>
    <property type="match status" value="1"/>
</dbReference>
<dbReference type="FunFam" id="1.10.238.10:FF:000053">
    <property type="entry name" value="Putative testican-3 isoform 3"/>
    <property type="match status" value="1"/>
</dbReference>
<dbReference type="FunFam" id="3.30.60.30:FF:000003">
    <property type="entry name" value="SPARC/osteonectin, cwcv and kazal-like domains proteoglycan 3"/>
    <property type="match status" value="1"/>
</dbReference>
<dbReference type="FunFam" id="4.10.800.10:FF:000001">
    <property type="entry name" value="Testican-3 isoform 2"/>
    <property type="match status" value="1"/>
</dbReference>
<dbReference type="Gene3D" id="3.30.60.30">
    <property type="match status" value="1"/>
</dbReference>
<dbReference type="Gene3D" id="1.10.238.10">
    <property type="entry name" value="EF-hand"/>
    <property type="match status" value="1"/>
</dbReference>
<dbReference type="Gene3D" id="4.10.800.10">
    <property type="entry name" value="Thyroglobulin type-1"/>
    <property type="match status" value="1"/>
</dbReference>
<dbReference type="InterPro" id="IPR011992">
    <property type="entry name" value="EF-hand-dom_pair"/>
</dbReference>
<dbReference type="InterPro" id="IPR002350">
    <property type="entry name" value="Kazal_dom"/>
</dbReference>
<dbReference type="InterPro" id="IPR036058">
    <property type="entry name" value="Kazal_dom_sf"/>
</dbReference>
<dbReference type="InterPro" id="IPR019577">
    <property type="entry name" value="SPARC/Testican_Ca-bd-dom"/>
</dbReference>
<dbReference type="InterPro" id="IPR000716">
    <property type="entry name" value="Thyroglobulin_1"/>
</dbReference>
<dbReference type="InterPro" id="IPR036857">
    <property type="entry name" value="Thyroglobulin_1_sf"/>
</dbReference>
<dbReference type="PANTHER" id="PTHR13866">
    <property type="entry name" value="SPARC OSTEONECTIN"/>
    <property type="match status" value="1"/>
</dbReference>
<dbReference type="PANTHER" id="PTHR13866:SF21">
    <property type="entry name" value="TESTICAN-3"/>
    <property type="match status" value="1"/>
</dbReference>
<dbReference type="Pfam" id="PF07648">
    <property type="entry name" value="Kazal_2"/>
    <property type="match status" value="1"/>
</dbReference>
<dbReference type="Pfam" id="PF10591">
    <property type="entry name" value="SPARC_Ca_bdg"/>
    <property type="match status" value="1"/>
</dbReference>
<dbReference type="Pfam" id="PF00086">
    <property type="entry name" value="Thyroglobulin_1"/>
    <property type="match status" value="1"/>
</dbReference>
<dbReference type="SMART" id="SM00280">
    <property type="entry name" value="KAZAL"/>
    <property type="match status" value="1"/>
</dbReference>
<dbReference type="SMART" id="SM00211">
    <property type="entry name" value="TY"/>
    <property type="match status" value="1"/>
</dbReference>
<dbReference type="SUPFAM" id="SSF47473">
    <property type="entry name" value="EF-hand"/>
    <property type="match status" value="1"/>
</dbReference>
<dbReference type="SUPFAM" id="SSF100895">
    <property type="entry name" value="Kazal-type serine protease inhibitors"/>
    <property type="match status" value="1"/>
</dbReference>
<dbReference type="SUPFAM" id="SSF57610">
    <property type="entry name" value="Thyroglobulin type-1 domain"/>
    <property type="match status" value="1"/>
</dbReference>
<dbReference type="PROSITE" id="PS51465">
    <property type="entry name" value="KAZAL_2"/>
    <property type="match status" value="1"/>
</dbReference>
<dbReference type="PROSITE" id="PS00484">
    <property type="entry name" value="THYROGLOBULIN_1_1"/>
    <property type="match status" value="1"/>
</dbReference>
<dbReference type="PROSITE" id="PS51162">
    <property type="entry name" value="THYROGLOBULIN_1_2"/>
    <property type="match status" value="1"/>
</dbReference>
<keyword id="KW-0025">Alternative splicing</keyword>
<keyword id="KW-0106">Calcium</keyword>
<keyword id="KW-1015">Disulfide bond</keyword>
<keyword id="KW-0272">Extracellular matrix</keyword>
<keyword id="KW-0325">Glycoprotein</keyword>
<keyword id="KW-0357">Heparan sulfate</keyword>
<keyword id="KW-0481">Metalloenzyme inhibitor</keyword>
<keyword id="KW-0483">Metalloprotease inhibitor</keyword>
<keyword id="KW-0646">Protease inhibitor</keyword>
<keyword id="KW-0654">Proteoglycan</keyword>
<keyword id="KW-1185">Reference proteome</keyword>
<keyword id="KW-0964">Secreted</keyword>
<keyword id="KW-0732">Signal</keyword>
<protein>
    <recommendedName>
        <fullName>Testican-3</fullName>
    </recommendedName>
    <alternativeName>
        <fullName>SPARC/osteonectin, CWCV, and Kazal-like domains proteoglycan 3</fullName>
    </alternativeName>
</protein>
<feature type="signal peptide" evidence="2">
    <location>
        <begin position="1"/>
        <end position="22"/>
    </location>
</feature>
<feature type="chain" id="PRO_0000026704" description="Testican-3">
    <location>
        <begin position="23"/>
        <end position="436"/>
    </location>
</feature>
<feature type="domain" description="Kazal-like" evidence="4">
    <location>
        <begin position="133"/>
        <end position="185"/>
    </location>
</feature>
<feature type="domain" description="Thyroglobulin type-1" evidence="3">
    <location>
        <begin position="314"/>
        <end position="380"/>
    </location>
</feature>
<feature type="region of interest" description="Disordered" evidence="5">
    <location>
        <begin position="393"/>
        <end position="436"/>
    </location>
</feature>
<feature type="compositionally biased region" description="Acidic residues" evidence="5">
    <location>
        <begin position="399"/>
        <end position="430"/>
    </location>
</feature>
<feature type="glycosylation site" description="O-linked (Xyl...) (glycosaminoglycan) serine" evidence="2">
    <location>
        <position position="387"/>
    </location>
</feature>
<feature type="glycosylation site" description="O-linked (Xyl...) (glycosaminoglycan) serine" evidence="2">
    <location>
        <position position="392"/>
    </location>
</feature>
<feature type="disulfide bond" evidence="1">
    <location>
        <begin position="90"/>
        <end position="101"/>
    </location>
</feature>
<feature type="disulfide bond" evidence="1">
    <location>
        <begin position="95"/>
        <end position="111"/>
    </location>
</feature>
<feature type="disulfide bond" evidence="1">
    <location>
        <begin position="139"/>
        <end position="169"/>
    </location>
</feature>
<feature type="disulfide bond" evidence="1">
    <location>
        <begin position="142"/>
        <end position="162"/>
    </location>
</feature>
<feature type="disulfide bond" evidence="1">
    <location>
        <begin position="151"/>
        <end position="183"/>
    </location>
</feature>
<feature type="disulfide bond" evidence="1">
    <location>
        <begin position="317"/>
        <end position="341"/>
    </location>
</feature>
<feature type="disulfide bond" evidence="1">
    <location>
        <begin position="352"/>
        <end position="359"/>
    </location>
</feature>
<feature type="disulfide bond" evidence="1">
    <location>
        <begin position="361"/>
        <end position="380"/>
    </location>
</feature>
<feature type="splice variant" id="VSP_013633" description="In isoform 2." evidence="6">
    <location>
        <begin position="64"/>
        <end position="66"/>
    </location>
</feature>
<reference key="1">
    <citation type="submission" date="2000-09" db="EMBL/GenBank/DDBJ databases">
        <title>Cloning of mouse testican-3.</title>
        <authorList>
            <person name="Mueller R."/>
            <person name="Paulsson M."/>
            <person name="Maurer P."/>
            <person name="Hartmann U."/>
        </authorList>
    </citation>
    <scope>NUCLEOTIDE SEQUENCE [MRNA] (ISOFORM 1)</scope>
    <source>
        <tissue>Brain</tissue>
    </source>
</reference>
<reference key="2">
    <citation type="journal article" date="2005" name="Science">
        <title>The transcriptional landscape of the mammalian genome.</title>
        <authorList>
            <person name="Carninci P."/>
            <person name="Kasukawa T."/>
            <person name="Katayama S."/>
            <person name="Gough J."/>
            <person name="Frith M.C."/>
            <person name="Maeda N."/>
            <person name="Oyama R."/>
            <person name="Ravasi T."/>
            <person name="Lenhard B."/>
            <person name="Wells C."/>
            <person name="Kodzius R."/>
            <person name="Shimokawa K."/>
            <person name="Bajic V.B."/>
            <person name="Brenner S.E."/>
            <person name="Batalov S."/>
            <person name="Forrest A.R."/>
            <person name="Zavolan M."/>
            <person name="Davis M.J."/>
            <person name="Wilming L.G."/>
            <person name="Aidinis V."/>
            <person name="Allen J.E."/>
            <person name="Ambesi-Impiombato A."/>
            <person name="Apweiler R."/>
            <person name="Aturaliya R.N."/>
            <person name="Bailey T.L."/>
            <person name="Bansal M."/>
            <person name="Baxter L."/>
            <person name="Beisel K.W."/>
            <person name="Bersano T."/>
            <person name="Bono H."/>
            <person name="Chalk A.M."/>
            <person name="Chiu K.P."/>
            <person name="Choudhary V."/>
            <person name="Christoffels A."/>
            <person name="Clutterbuck D.R."/>
            <person name="Crowe M.L."/>
            <person name="Dalla E."/>
            <person name="Dalrymple B.P."/>
            <person name="de Bono B."/>
            <person name="Della Gatta G."/>
            <person name="di Bernardo D."/>
            <person name="Down T."/>
            <person name="Engstrom P."/>
            <person name="Fagiolini M."/>
            <person name="Faulkner G."/>
            <person name="Fletcher C.F."/>
            <person name="Fukushima T."/>
            <person name="Furuno M."/>
            <person name="Futaki S."/>
            <person name="Gariboldi M."/>
            <person name="Georgii-Hemming P."/>
            <person name="Gingeras T.R."/>
            <person name="Gojobori T."/>
            <person name="Green R.E."/>
            <person name="Gustincich S."/>
            <person name="Harbers M."/>
            <person name="Hayashi Y."/>
            <person name="Hensch T.K."/>
            <person name="Hirokawa N."/>
            <person name="Hill D."/>
            <person name="Huminiecki L."/>
            <person name="Iacono M."/>
            <person name="Ikeo K."/>
            <person name="Iwama A."/>
            <person name="Ishikawa T."/>
            <person name="Jakt M."/>
            <person name="Kanapin A."/>
            <person name="Katoh M."/>
            <person name="Kawasawa Y."/>
            <person name="Kelso J."/>
            <person name="Kitamura H."/>
            <person name="Kitano H."/>
            <person name="Kollias G."/>
            <person name="Krishnan S.P."/>
            <person name="Kruger A."/>
            <person name="Kummerfeld S.K."/>
            <person name="Kurochkin I.V."/>
            <person name="Lareau L.F."/>
            <person name="Lazarevic D."/>
            <person name="Lipovich L."/>
            <person name="Liu J."/>
            <person name="Liuni S."/>
            <person name="McWilliam S."/>
            <person name="Madan Babu M."/>
            <person name="Madera M."/>
            <person name="Marchionni L."/>
            <person name="Matsuda H."/>
            <person name="Matsuzawa S."/>
            <person name="Miki H."/>
            <person name="Mignone F."/>
            <person name="Miyake S."/>
            <person name="Morris K."/>
            <person name="Mottagui-Tabar S."/>
            <person name="Mulder N."/>
            <person name="Nakano N."/>
            <person name="Nakauchi H."/>
            <person name="Ng P."/>
            <person name="Nilsson R."/>
            <person name="Nishiguchi S."/>
            <person name="Nishikawa S."/>
            <person name="Nori F."/>
            <person name="Ohara O."/>
            <person name="Okazaki Y."/>
            <person name="Orlando V."/>
            <person name="Pang K.C."/>
            <person name="Pavan W.J."/>
            <person name="Pavesi G."/>
            <person name="Pesole G."/>
            <person name="Petrovsky N."/>
            <person name="Piazza S."/>
            <person name="Reed J."/>
            <person name="Reid J.F."/>
            <person name="Ring B.Z."/>
            <person name="Ringwald M."/>
            <person name="Rost B."/>
            <person name="Ruan Y."/>
            <person name="Salzberg S.L."/>
            <person name="Sandelin A."/>
            <person name="Schneider C."/>
            <person name="Schoenbach C."/>
            <person name="Sekiguchi K."/>
            <person name="Semple C.A."/>
            <person name="Seno S."/>
            <person name="Sessa L."/>
            <person name="Sheng Y."/>
            <person name="Shibata Y."/>
            <person name="Shimada H."/>
            <person name="Shimada K."/>
            <person name="Silva D."/>
            <person name="Sinclair B."/>
            <person name="Sperling S."/>
            <person name="Stupka E."/>
            <person name="Sugiura K."/>
            <person name="Sultana R."/>
            <person name="Takenaka Y."/>
            <person name="Taki K."/>
            <person name="Tammoja K."/>
            <person name="Tan S.L."/>
            <person name="Tang S."/>
            <person name="Taylor M.S."/>
            <person name="Tegner J."/>
            <person name="Teichmann S.A."/>
            <person name="Ueda H.R."/>
            <person name="van Nimwegen E."/>
            <person name="Verardo R."/>
            <person name="Wei C.L."/>
            <person name="Yagi K."/>
            <person name="Yamanishi H."/>
            <person name="Zabarovsky E."/>
            <person name="Zhu S."/>
            <person name="Zimmer A."/>
            <person name="Hide W."/>
            <person name="Bult C."/>
            <person name="Grimmond S.M."/>
            <person name="Teasdale R.D."/>
            <person name="Liu E.T."/>
            <person name="Brusic V."/>
            <person name="Quackenbush J."/>
            <person name="Wahlestedt C."/>
            <person name="Mattick J.S."/>
            <person name="Hume D.A."/>
            <person name="Kai C."/>
            <person name="Sasaki D."/>
            <person name="Tomaru Y."/>
            <person name="Fukuda S."/>
            <person name="Kanamori-Katayama M."/>
            <person name="Suzuki M."/>
            <person name="Aoki J."/>
            <person name="Arakawa T."/>
            <person name="Iida J."/>
            <person name="Imamura K."/>
            <person name="Itoh M."/>
            <person name="Kato T."/>
            <person name="Kawaji H."/>
            <person name="Kawagashira N."/>
            <person name="Kawashima T."/>
            <person name="Kojima M."/>
            <person name="Kondo S."/>
            <person name="Konno H."/>
            <person name="Nakano K."/>
            <person name="Ninomiya N."/>
            <person name="Nishio T."/>
            <person name="Okada M."/>
            <person name="Plessy C."/>
            <person name="Shibata K."/>
            <person name="Shiraki T."/>
            <person name="Suzuki S."/>
            <person name="Tagami M."/>
            <person name="Waki K."/>
            <person name="Watahiki A."/>
            <person name="Okamura-Oho Y."/>
            <person name="Suzuki H."/>
            <person name="Kawai J."/>
            <person name="Hayashizaki Y."/>
        </authorList>
    </citation>
    <scope>NUCLEOTIDE SEQUENCE [LARGE SCALE MRNA] (ISOFORMS 1 AND 2)</scope>
    <source>
        <strain>C57BL/6J</strain>
        <tissue>Hippocampus</tissue>
    </source>
</reference>
<reference key="3">
    <citation type="journal article" date="2004" name="Genome Res.">
        <title>The status, quality, and expansion of the NIH full-length cDNA project: the Mammalian Gene Collection (MGC).</title>
        <authorList>
            <consortium name="The MGC Project Team"/>
        </authorList>
    </citation>
    <scope>NUCLEOTIDE SEQUENCE [LARGE SCALE MRNA] (ISOFORM 1)</scope>
    <source>
        <tissue>Eye</tissue>
    </source>
</reference>
<name>TICN3_MOUSE</name>
<sequence>MLKVSALLCVCAAAWCSQTLAAAAAVAVAGGRSDGGNFLDEKQWLTTISQYDKEVGQWNKFRDEVEDDYFRTWNPGKPFDQALDPAKDPCLKTKCSRHKVCITQDAQTALCISHRRLTHSMKEVGGSHKQWRGLPSSTCKPCPIAYASPVCGSDGHSYSSQCKLEYQACVLGKQISIKCEGRCPCPSDKSMNIGRNVKRACSDLEFREVANRLRDWFKALHESGSQNKKTKALLRPERSRFDTSILPICKDSLGWMFNRLDTNYDLLLDQSELGSIYLDKNEQCTKAFFNSCDTYKDSLISNNEWCYCFQRQQDPPCHTELSNIQKRQGIKKLLGQYIPLCDEDGYYKPTQCHGSVGQCWCVDRYGNEVVGSRINGVADCAIDFEISGDFASGDFREWTDDEGEEDDIMNDKDDIEDDDEDEGDDDDDGDVHDGYI</sequence>
<evidence type="ECO:0000250" key="1"/>
<evidence type="ECO:0000255" key="2"/>
<evidence type="ECO:0000255" key="3">
    <source>
        <dbReference type="PROSITE-ProRule" id="PRU00500"/>
    </source>
</evidence>
<evidence type="ECO:0000255" key="4">
    <source>
        <dbReference type="PROSITE-ProRule" id="PRU00798"/>
    </source>
</evidence>
<evidence type="ECO:0000256" key="5">
    <source>
        <dbReference type="SAM" id="MobiDB-lite"/>
    </source>
</evidence>
<evidence type="ECO:0000303" key="6">
    <source>
    </source>
</evidence>